<sequence length="537" mass="60846">MGCVQCKDKEATKLTDERDNSLTQSLGYRYGTDPTPQHYPSFTVTTIPNYNNFHATAGQGLTVFGGVNSSSHTGTLRTRGGTGVTLFVALYDYEARTEDDLSFQKGEKFQILNSSEGDWWEARSLTTGGTGYIPSNYVAPVDSIQAEEWYFGKLGRKDAERQLLSFGNPRGTYLIRESETTKGAYSLSIRDWDDMKGDHVKHYKIRKLDNGGYYITTRAQFETLQQLVQHYSERAAGLCCRLVVPCHKGMPRLTDLSVKTKDVWEIPRESLQLIKRLGNGQFGEVWMGTWNGNTKVAIKTLKPGTMSPESFLEEAQIMKKLKHDKLVQLYAVVSEEPIYIVTEYMSKGSLLDFLKDGEGRALKLPNLVDMAAQVARGMAYIERMNYIHRDLRSANILVGNGLICKIADFGLARLIEDNEYTARQGAKFPIKWTAPEAALYGRFTIKSDVWSFGILLTELVTKGRVPYPGMNNREVLEQVERGYRMPCPQDCPISLHELMLNCWKKDPEERPTFEYLQGFLEDYFTATEPQYQPGDNL</sequence>
<comment type="function">
    <text evidence="2 8">Tyrosine-protein kinase implicated in the control of cell growth. Plays a role in the regulation of intracellular calcium levels (By similarity). Required in brain development and mature brain function with important roles in the regulation of axon growth, axon guidance, and neurite extension. Blocks axon outgrowth and attraction induced by ntn1 by phosphorylating its receptor ddc.</text>
</comment>
<comment type="catalytic activity">
    <reaction evidence="6">
        <text>L-tyrosyl-[protein] + ATP = O-phospho-L-tyrosyl-[protein] + ADP + H(+)</text>
        <dbReference type="Rhea" id="RHEA:10596"/>
        <dbReference type="Rhea" id="RHEA-COMP:10136"/>
        <dbReference type="Rhea" id="RHEA-COMP:20101"/>
        <dbReference type="ChEBI" id="CHEBI:15378"/>
        <dbReference type="ChEBI" id="CHEBI:30616"/>
        <dbReference type="ChEBI" id="CHEBI:46858"/>
        <dbReference type="ChEBI" id="CHEBI:61978"/>
        <dbReference type="ChEBI" id="CHEBI:456216"/>
        <dbReference type="EC" id="2.7.10.2"/>
    </reaction>
</comment>
<comment type="cofactor">
    <cofactor>
        <name>Mn(2+)</name>
        <dbReference type="ChEBI" id="CHEBI:29035"/>
    </cofactor>
</comment>
<comment type="activity regulation">
    <text evidence="2">Inhibited by phosphorylation of Tyr-531 by leukocyte common antigen and activated by dephosphorylation of this site.</text>
</comment>
<comment type="subunit">
    <text>Associates through its SH3 domain, to the p85 subunit of phosphatidylinositol 3-kinase.</text>
</comment>
<comment type="developmental stage">
    <text evidence="7">Expressed in early tail-bud embryos at stage 20 in the brain region of the neural tube and at lower levels throughout the remaining length of the neural tube. Present at stage 32 in the forebrain, midbrain, the ventral half of the hindbrain and the spinal cord.</text>
</comment>
<comment type="similarity">
    <text evidence="3">Belongs to the protein kinase superfamily. Tyr protein kinase family. SRC subfamily.</text>
</comment>
<keyword id="KW-0067">ATP-binding</keyword>
<keyword id="KW-0217">Developmental protein</keyword>
<keyword id="KW-0418">Kinase</keyword>
<keyword id="KW-0449">Lipoprotein</keyword>
<keyword id="KW-0464">Manganese</keyword>
<keyword id="KW-0479">Metal-binding</keyword>
<keyword id="KW-0519">Myristate</keyword>
<keyword id="KW-0547">Nucleotide-binding</keyword>
<keyword id="KW-0564">Palmitate</keyword>
<keyword id="KW-0597">Phosphoprotein</keyword>
<keyword id="KW-0656">Proto-oncogene</keyword>
<keyword id="KW-1185">Reference proteome</keyword>
<keyword id="KW-0727">SH2 domain</keyword>
<keyword id="KW-0728">SH3 domain</keyword>
<keyword id="KW-0808">Transferase</keyword>
<keyword id="KW-0829">Tyrosine-protein kinase</keyword>
<accession>P13406</accession>
<accession>Q7ZYK3</accession>
<proteinExistence type="evidence at transcript level"/>
<name>FYN_XENLA</name>
<evidence type="ECO:0000250" key="1"/>
<evidence type="ECO:0000250" key="2">
    <source>
        <dbReference type="UniProtKB" id="P06241"/>
    </source>
</evidence>
<evidence type="ECO:0000255" key="3">
    <source>
        <dbReference type="PROSITE-ProRule" id="PRU00159"/>
    </source>
</evidence>
<evidence type="ECO:0000255" key="4">
    <source>
        <dbReference type="PROSITE-ProRule" id="PRU00191"/>
    </source>
</evidence>
<evidence type="ECO:0000255" key="5">
    <source>
        <dbReference type="PROSITE-ProRule" id="PRU00192"/>
    </source>
</evidence>
<evidence type="ECO:0000255" key="6">
    <source>
        <dbReference type="PROSITE-ProRule" id="PRU10028"/>
    </source>
</evidence>
<evidence type="ECO:0000269" key="7">
    <source>
    </source>
</evidence>
<evidence type="ECO:0000269" key="8">
    <source>
    </source>
</evidence>
<evidence type="ECO:0000305" key="9"/>
<protein>
    <recommendedName>
        <fullName>Tyrosine-protein kinase Fyn</fullName>
        <ecNumber>2.7.10.2</ecNumber>
    </recommendedName>
    <alternativeName>
        <fullName>Proto-oncogene c-Fyn</fullName>
    </alternativeName>
    <alternativeName>
        <fullName>p59-Fyn</fullName>
    </alternativeName>
</protein>
<feature type="initiator methionine" description="Removed" evidence="1">
    <location>
        <position position="1"/>
    </location>
</feature>
<feature type="chain" id="PRO_0000088101" description="Tyrosine-protein kinase Fyn">
    <location>
        <begin position="2"/>
        <end position="537"/>
    </location>
</feature>
<feature type="domain" description="SH3" evidence="5">
    <location>
        <begin position="82"/>
        <end position="143"/>
    </location>
</feature>
<feature type="domain" description="SH2" evidence="4">
    <location>
        <begin position="149"/>
        <end position="246"/>
    </location>
</feature>
<feature type="domain" description="Protein kinase" evidence="3">
    <location>
        <begin position="271"/>
        <end position="524"/>
    </location>
</feature>
<feature type="active site" description="Proton acceptor" evidence="3 6">
    <location>
        <position position="390"/>
    </location>
</feature>
<feature type="binding site" evidence="3">
    <location>
        <begin position="277"/>
        <end position="285"/>
    </location>
    <ligand>
        <name>ATP</name>
        <dbReference type="ChEBI" id="CHEBI:30616"/>
    </ligand>
</feature>
<feature type="binding site" evidence="3">
    <location>
        <position position="299"/>
    </location>
    <ligand>
        <name>ATP</name>
        <dbReference type="ChEBI" id="CHEBI:30616"/>
    </ligand>
</feature>
<feature type="modified residue" description="Phosphothreonine; by PKC" evidence="1">
    <location>
        <position position="12"/>
    </location>
</feature>
<feature type="modified residue" description="Phosphotyrosine; by autocatalysis" evidence="1">
    <location>
        <position position="420"/>
    </location>
</feature>
<feature type="modified residue" description="Phosphotyrosine" evidence="1">
    <location>
        <position position="531"/>
    </location>
</feature>
<feature type="lipid moiety-binding region" description="N-myristoyl glycine" evidence="1">
    <location>
        <position position="2"/>
    </location>
</feature>
<feature type="lipid moiety-binding region" description="S-palmitoyl cysteine" evidence="1">
    <location>
        <position position="3"/>
    </location>
</feature>
<feature type="lipid moiety-binding region" description="S-palmitoyl cysteine" evidence="1">
    <location>
        <position position="6"/>
    </location>
</feature>
<feature type="sequence conflict" description="In Ref. 2; AAH43749." evidence="9" ref="2">
    <original>S</original>
    <variation>N</variation>
    <location>
        <position position="102"/>
    </location>
</feature>
<feature type="sequence conflict" description="In Ref. 2; AAH43749." evidence="9" ref="2">
    <original>T</original>
    <variation>A</variation>
    <location>
        <position position="223"/>
    </location>
</feature>
<feature type="sequence conflict" description="In Ref. 2; AAH43749." evidence="9" ref="2">
    <original>R</original>
    <variation>A</variation>
    <location>
        <position position="376"/>
    </location>
</feature>
<feature type="sequence conflict" description="In Ref. 2; AAH43749." evidence="9" ref="2">
    <original>I</original>
    <variation>N</variation>
    <location>
        <position position="493"/>
    </location>
</feature>
<dbReference type="EC" id="2.7.10.2"/>
<dbReference type="EMBL" id="X52188">
    <property type="protein sequence ID" value="CAA36435.1"/>
    <property type="molecule type" value="Genomic_DNA"/>
</dbReference>
<dbReference type="EMBL" id="M27502">
    <property type="protein sequence ID" value="AAA49719.1"/>
    <property type="molecule type" value="mRNA"/>
</dbReference>
<dbReference type="EMBL" id="BC043749">
    <property type="protein sequence ID" value="AAH43749.1"/>
    <property type="molecule type" value="mRNA"/>
</dbReference>
<dbReference type="PIR" id="A43806">
    <property type="entry name" value="A43806"/>
</dbReference>
<dbReference type="RefSeq" id="NP_001079077.1">
    <property type="nucleotide sequence ID" value="NM_001085608.2"/>
</dbReference>
<dbReference type="RefSeq" id="NP_001080120.1">
    <property type="nucleotide sequence ID" value="NM_001086651.1"/>
</dbReference>
<dbReference type="BMRB" id="P13406"/>
<dbReference type="SMR" id="P13406"/>
<dbReference type="DNASU" id="379812"/>
<dbReference type="GeneID" id="373609"/>
<dbReference type="GeneID" id="379812"/>
<dbReference type="KEGG" id="xla:373609"/>
<dbReference type="KEGG" id="xla:379812"/>
<dbReference type="CTD" id="373609"/>
<dbReference type="CTD" id="379812"/>
<dbReference type="OrthoDB" id="4062651at2759"/>
<dbReference type="BRENDA" id="2.7.10.2">
    <property type="organism ID" value="6725"/>
</dbReference>
<dbReference type="Proteomes" id="UP000186698">
    <property type="component" value="Chromosome 5L"/>
</dbReference>
<dbReference type="Proteomes" id="UP000186698">
    <property type="component" value="Chromosome 5S"/>
</dbReference>
<dbReference type="Bgee" id="373609">
    <property type="expression patterns" value="Expressed in internal ear and 19 other cell types or tissues"/>
</dbReference>
<dbReference type="GO" id="GO:0005886">
    <property type="term" value="C:plasma membrane"/>
    <property type="evidence" value="ECO:0000318"/>
    <property type="project" value="GO_Central"/>
</dbReference>
<dbReference type="GO" id="GO:0005524">
    <property type="term" value="F:ATP binding"/>
    <property type="evidence" value="ECO:0007669"/>
    <property type="project" value="UniProtKB-KW"/>
</dbReference>
<dbReference type="GO" id="GO:0046872">
    <property type="term" value="F:metal ion binding"/>
    <property type="evidence" value="ECO:0007669"/>
    <property type="project" value="UniProtKB-KW"/>
</dbReference>
<dbReference type="GO" id="GO:0004715">
    <property type="term" value="F:non-membrane spanning protein tyrosine kinase activity"/>
    <property type="evidence" value="ECO:0000318"/>
    <property type="project" value="GO_Central"/>
</dbReference>
<dbReference type="GO" id="GO:0005102">
    <property type="term" value="F:signaling receptor binding"/>
    <property type="evidence" value="ECO:0000318"/>
    <property type="project" value="GO_Central"/>
</dbReference>
<dbReference type="GO" id="GO:0030154">
    <property type="term" value="P:cell differentiation"/>
    <property type="evidence" value="ECO:0000318"/>
    <property type="project" value="GO_Central"/>
</dbReference>
<dbReference type="GO" id="GO:0007169">
    <property type="term" value="P:cell surface receptor protein tyrosine kinase signaling pathway"/>
    <property type="evidence" value="ECO:0000318"/>
    <property type="project" value="GO_Central"/>
</dbReference>
<dbReference type="GO" id="GO:0038026">
    <property type="term" value="P:reelin-mediated signaling pathway"/>
    <property type="evidence" value="ECO:0000250"/>
    <property type="project" value="UniProtKB"/>
</dbReference>
<dbReference type="GO" id="GO:0050852">
    <property type="term" value="P:T cell receptor signaling pathway"/>
    <property type="evidence" value="ECO:0000318"/>
    <property type="project" value="GO_Central"/>
</dbReference>
<dbReference type="CDD" id="cd05070">
    <property type="entry name" value="PTKc_Fyn"/>
    <property type="match status" value="1"/>
</dbReference>
<dbReference type="CDD" id="cd10418">
    <property type="entry name" value="SH2_Src_Fyn_isoform_a_like"/>
    <property type="match status" value="1"/>
</dbReference>
<dbReference type="CDD" id="cd12006">
    <property type="entry name" value="SH3_Fyn_Yrk"/>
    <property type="match status" value="1"/>
</dbReference>
<dbReference type="FunFam" id="1.10.510.10:FF:000553">
    <property type="entry name" value="Tyrosine-protein kinase"/>
    <property type="match status" value="1"/>
</dbReference>
<dbReference type="FunFam" id="3.30.200.20:FF:000016">
    <property type="entry name" value="Tyrosine-protein kinase"/>
    <property type="match status" value="1"/>
</dbReference>
<dbReference type="FunFam" id="2.30.30.40:FF:000182">
    <property type="entry name" value="Tyrosine-protein kinase Fyn"/>
    <property type="match status" value="1"/>
</dbReference>
<dbReference type="FunFam" id="3.30.505.10:FF:000120">
    <property type="entry name" value="Tyrosine-protein kinase Fyn"/>
    <property type="match status" value="1"/>
</dbReference>
<dbReference type="Gene3D" id="3.30.200.20">
    <property type="entry name" value="Phosphorylase Kinase, domain 1"/>
    <property type="match status" value="1"/>
</dbReference>
<dbReference type="Gene3D" id="3.30.505.10">
    <property type="entry name" value="SH2 domain"/>
    <property type="match status" value="1"/>
</dbReference>
<dbReference type="Gene3D" id="2.30.30.40">
    <property type="entry name" value="SH3 Domains"/>
    <property type="match status" value="1"/>
</dbReference>
<dbReference type="Gene3D" id="1.10.510.10">
    <property type="entry name" value="Transferase(Phosphotransferase) domain 1"/>
    <property type="match status" value="1"/>
</dbReference>
<dbReference type="InterPro" id="IPR047924">
    <property type="entry name" value="Fyn/Yrk_SH2"/>
</dbReference>
<dbReference type="InterPro" id="IPR035750">
    <property type="entry name" value="Fyn/Yrk_SH3"/>
</dbReference>
<dbReference type="InterPro" id="IPR011009">
    <property type="entry name" value="Kinase-like_dom_sf"/>
</dbReference>
<dbReference type="InterPro" id="IPR050198">
    <property type="entry name" value="Non-receptor_tyrosine_kinases"/>
</dbReference>
<dbReference type="InterPro" id="IPR000719">
    <property type="entry name" value="Prot_kinase_dom"/>
</dbReference>
<dbReference type="InterPro" id="IPR017441">
    <property type="entry name" value="Protein_kinase_ATP_BS"/>
</dbReference>
<dbReference type="InterPro" id="IPR001245">
    <property type="entry name" value="Ser-Thr/Tyr_kinase_cat_dom"/>
</dbReference>
<dbReference type="InterPro" id="IPR000980">
    <property type="entry name" value="SH2"/>
</dbReference>
<dbReference type="InterPro" id="IPR036860">
    <property type="entry name" value="SH2_dom_sf"/>
</dbReference>
<dbReference type="InterPro" id="IPR036028">
    <property type="entry name" value="SH3-like_dom_sf"/>
</dbReference>
<dbReference type="InterPro" id="IPR001452">
    <property type="entry name" value="SH3_domain"/>
</dbReference>
<dbReference type="InterPro" id="IPR008266">
    <property type="entry name" value="Tyr_kinase_AS"/>
</dbReference>
<dbReference type="InterPro" id="IPR020635">
    <property type="entry name" value="Tyr_kinase_cat_dom"/>
</dbReference>
<dbReference type="PANTHER" id="PTHR24418">
    <property type="entry name" value="TYROSINE-PROTEIN KINASE"/>
    <property type="match status" value="1"/>
</dbReference>
<dbReference type="Pfam" id="PF07714">
    <property type="entry name" value="PK_Tyr_Ser-Thr"/>
    <property type="match status" value="1"/>
</dbReference>
<dbReference type="Pfam" id="PF00017">
    <property type="entry name" value="SH2"/>
    <property type="match status" value="1"/>
</dbReference>
<dbReference type="Pfam" id="PF00018">
    <property type="entry name" value="SH3_1"/>
    <property type="match status" value="1"/>
</dbReference>
<dbReference type="PRINTS" id="PR00401">
    <property type="entry name" value="SH2DOMAIN"/>
</dbReference>
<dbReference type="PRINTS" id="PR00452">
    <property type="entry name" value="SH3DOMAIN"/>
</dbReference>
<dbReference type="PRINTS" id="PR00109">
    <property type="entry name" value="TYRKINASE"/>
</dbReference>
<dbReference type="SMART" id="SM00252">
    <property type="entry name" value="SH2"/>
    <property type="match status" value="1"/>
</dbReference>
<dbReference type="SMART" id="SM00326">
    <property type="entry name" value="SH3"/>
    <property type="match status" value="1"/>
</dbReference>
<dbReference type="SMART" id="SM00219">
    <property type="entry name" value="TyrKc"/>
    <property type="match status" value="1"/>
</dbReference>
<dbReference type="SUPFAM" id="SSF56112">
    <property type="entry name" value="Protein kinase-like (PK-like)"/>
    <property type="match status" value="1"/>
</dbReference>
<dbReference type="SUPFAM" id="SSF55550">
    <property type="entry name" value="SH2 domain"/>
    <property type="match status" value="1"/>
</dbReference>
<dbReference type="SUPFAM" id="SSF50044">
    <property type="entry name" value="SH3-domain"/>
    <property type="match status" value="1"/>
</dbReference>
<dbReference type="PROSITE" id="PS00107">
    <property type="entry name" value="PROTEIN_KINASE_ATP"/>
    <property type="match status" value="1"/>
</dbReference>
<dbReference type="PROSITE" id="PS50011">
    <property type="entry name" value="PROTEIN_KINASE_DOM"/>
    <property type="match status" value="1"/>
</dbReference>
<dbReference type="PROSITE" id="PS00109">
    <property type="entry name" value="PROTEIN_KINASE_TYR"/>
    <property type="match status" value="1"/>
</dbReference>
<dbReference type="PROSITE" id="PS50001">
    <property type="entry name" value="SH2"/>
    <property type="match status" value="1"/>
</dbReference>
<dbReference type="PROSITE" id="PS50002">
    <property type="entry name" value="SH3"/>
    <property type="match status" value="1"/>
</dbReference>
<gene>
    <name type="primary">fyn</name>
</gene>
<organism>
    <name type="scientific">Xenopus laevis</name>
    <name type="common">African clawed frog</name>
    <dbReference type="NCBI Taxonomy" id="8355"/>
    <lineage>
        <taxon>Eukaryota</taxon>
        <taxon>Metazoa</taxon>
        <taxon>Chordata</taxon>
        <taxon>Craniata</taxon>
        <taxon>Vertebrata</taxon>
        <taxon>Euteleostomi</taxon>
        <taxon>Amphibia</taxon>
        <taxon>Batrachia</taxon>
        <taxon>Anura</taxon>
        <taxon>Pipoidea</taxon>
        <taxon>Pipidae</taxon>
        <taxon>Xenopodinae</taxon>
        <taxon>Xenopus</taxon>
        <taxon>Xenopus</taxon>
    </lineage>
</organism>
<reference key="1">
    <citation type="journal article" date="1990" name="Oncogene">
        <title>Structure and expression of fyn genes in Xenopus laevis.</title>
        <authorList>
            <person name="Steele R.E."/>
            <person name="Deng J.C."/>
            <person name="Ghosn C.R."/>
            <person name="Fero J.B."/>
        </authorList>
    </citation>
    <scope>NUCLEOTIDE SEQUENCE [GENOMIC DNA]</scope>
</reference>
<reference key="2">
    <citation type="submission" date="2003-01" db="EMBL/GenBank/DDBJ databases">
        <authorList>
            <consortium name="NIH - Xenopus Gene Collection (XGC) project"/>
        </authorList>
    </citation>
    <scope>NUCLEOTIDE SEQUENCE [LARGE SCALE MRNA]</scope>
    <source>
        <tissue>Embryo</tissue>
    </source>
</reference>
<reference key="3">
    <citation type="journal article" date="2001" name="Dev. Growth Differ.">
        <title>Overexpression of Fyn tyrosine kinase causes abnormal development of primary sensory neurons in Xenopus laevis embryos.</title>
        <authorList>
            <person name="Saito R."/>
            <person name="Fujita N."/>
            <person name="Nagata S."/>
        </authorList>
    </citation>
    <scope>DEVELOPMENTAL STAGE</scope>
</reference>
<reference key="4">
    <citation type="journal article" date="2004" name="J. Cell Biol.">
        <title>Phosphorylation of DCC by Fyn mediates Netrin-1 signaling in growth cone guidance.</title>
        <authorList>
            <person name="Meriane M."/>
            <person name="Tcherkezian J."/>
            <person name="Webber C.A."/>
            <person name="Danek E.I."/>
            <person name="Triki I."/>
            <person name="McFarlane S."/>
            <person name="Bloch-Gallego E."/>
            <person name="Lamarche-Vane N."/>
        </authorList>
    </citation>
    <scope>FUNCTION</scope>
</reference>